<reference key="1">
    <citation type="journal article" date="2007" name="Photosyn. Res.">
        <title>Complete nucleotide sequence of the freshwater unicellular cyanobacterium Synechococcus elongatus PCC 6301 chromosome: gene content and organization.</title>
        <authorList>
            <person name="Sugita C."/>
            <person name="Ogata K."/>
            <person name="Shikata M."/>
            <person name="Jikuya H."/>
            <person name="Takano J."/>
            <person name="Furumichi M."/>
            <person name="Kanehisa M."/>
            <person name="Omata T."/>
            <person name="Sugiura M."/>
            <person name="Sugita M."/>
        </authorList>
    </citation>
    <scope>NUCLEOTIDE SEQUENCE [LARGE SCALE GENOMIC DNA]</scope>
    <source>
        <strain>ATCC 27144 / PCC 6301 / SAUG 1402/1</strain>
    </source>
</reference>
<organism>
    <name type="scientific">Synechococcus sp. (strain ATCC 27144 / PCC 6301 / SAUG 1402/1)</name>
    <name type="common">Anacystis nidulans</name>
    <dbReference type="NCBI Taxonomy" id="269084"/>
    <lineage>
        <taxon>Bacteria</taxon>
        <taxon>Bacillati</taxon>
        <taxon>Cyanobacteriota</taxon>
        <taxon>Cyanophyceae</taxon>
        <taxon>Synechococcales</taxon>
        <taxon>Synechococcaceae</taxon>
        <taxon>Synechococcus</taxon>
    </lineage>
</organism>
<feature type="signal peptide" description="Tat-type signal" evidence="2">
    <location>
        <begin position="1"/>
        <end position="36"/>
    </location>
</feature>
<feature type="chain" id="PRO_0000341963" description="Bicarbonate-binding protein CmpA">
    <location>
        <begin position="37"/>
        <end position="450"/>
    </location>
</feature>
<comment type="function">
    <text evidence="1">Part of the ABC transporter complex CmpABCD involved in bicarbonate transport. Binds bicarbonate with high affinity (By similarity).</text>
</comment>
<comment type="subunit">
    <text evidence="1">The complex is composed of two ATP-binding proteins (CmpC and CmpD), a transmembrane protein (CmpB) and a solute-binding protein (CmpA).</text>
</comment>
<comment type="subcellular location">
    <subcellularLocation>
        <location evidence="1">Cell inner membrane</location>
        <topology evidence="1">Peripheral membrane protein</topology>
    </subcellularLocation>
</comment>
<comment type="induction">
    <text evidence="1">By carbon dioxide-limited conditions, probably via CmpR.</text>
</comment>
<comment type="PTM">
    <text>Predicted to be exported by the Tat system. The position of the signal peptide cleavage has not been experimentally proven.</text>
</comment>
<comment type="similarity">
    <text evidence="3">Belongs to the CmpA/NrtA family.</text>
</comment>
<keyword id="KW-0997">Cell inner membrane</keyword>
<keyword id="KW-1003">Cell membrane</keyword>
<keyword id="KW-0406">Ion transport</keyword>
<keyword id="KW-0472">Membrane</keyword>
<keyword id="KW-0732">Signal</keyword>
<keyword id="KW-0813">Transport</keyword>
<name>CMPA_SYNP6</name>
<gene>
    <name type="primary">cmpA</name>
    <name type="ordered locus">syc2474_d</name>
</gene>
<evidence type="ECO:0000250" key="1"/>
<evidence type="ECO:0000255" key="2">
    <source>
        <dbReference type="PROSITE-ProRule" id="PRU00648"/>
    </source>
</evidence>
<evidence type="ECO:0000305" key="3"/>
<proteinExistence type="inferred from homology"/>
<sequence>MNEFQPVNRRQFLFTLGATAASAILLKGCGNPPSSSGGGTSSTTQPTAAGASDLEVKTIKLGYIPIFEAAPLIIGREKGFFAKYGLDVEVSKQASWAAARDNVILGSAGGGIDGGQWQMPMPALLTEGAISNGQKVPMYVLACLSTQGNGIAVSNQLKAQNLGLKLAPNRDFILNYPQTSGRKFKASYTFPNANQDFWIRYWFAAGGIDPDKDIELLTVPSAETLQNMRNGTIDCFSTGDPWPSRIAKDDVGYQAALTGQMWPYHPEEFLALRADWVDKHPKATLALLMGLMEAQQWCDQKANRAEMAKILSGRNFFNVPVSILQPILEGQIKVGADGKDLNNFDAGPLFWKSPRGSVSYPYKGLTLWFLVESIRWGFNKQVLPDIAAAQKLNDRVTREDLWQEAAKKLGVPAADIPTGSTRGTETFFDGITYNPDSPQAYLQSLKIKRA</sequence>
<accession>Q5MZ56</accession>
<protein>
    <recommendedName>
        <fullName>Bicarbonate-binding protein CmpA</fullName>
    </recommendedName>
</protein>
<dbReference type="EMBL" id="AP008231">
    <property type="protein sequence ID" value="BAD80664.1"/>
    <property type="molecule type" value="Genomic_DNA"/>
</dbReference>
<dbReference type="RefSeq" id="WP_011244784.1">
    <property type="nucleotide sequence ID" value="NC_006576.1"/>
</dbReference>
<dbReference type="SMR" id="Q5MZ56"/>
<dbReference type="KEGG" id="syc:syc2474_d"/>
<dbReference type="eggNOG" id="COG0715">
    <property type="taxonomic scope" value="Bacteria"/>
</dbReference>
<dbReference type="Proteomes" id="UP000001175">
    <property type="component" value="Chromosome"/>
</dbReference>
<dbReference type="GO" id="GO:0005886">
    <property type="term" value="C:plasma membrane"/>
    <property type="evidence" value="ECO:0007669"/>
    <property type="project" value="UniProtKB-SubCell"/>
</dbReference>
<dbReference type="GO" id="GO:0006811">
    <property type="term" value="P:monoatomic ion transport"/>
    <property type="evidence" value="ECO:0007669"/>
    <property type="project" value="UniProtKB-KW"/>
</dbReference>
<dbReference type="CDD" id="cd13553">
    <property type="entry name" value="PBP2_NrtA_CpmA_like"/>
    <property type="match status" value="1"/>
</dbReference>
<dbReference type="Gene3D" id="3.40.190.10">
    <property type="entry name" value="Periplasmic binding protein-like II"/>
    <property type="match status" value="2"/>
</dbReference>
<dbReference type="InterPro" id="IPR044527">
    <property type="entry name" value="NrtA/CpmA_ABC-bd_dom"/>
</dbReference>
<dbReference type="InterPro" id="IPR006311">
    <property type="entry name" value="TAT_signal"/>
</dbReference>
<dbReference type="PANTHER" id="PTHR30024">
    <property type="entry name" value="ALIPHATIC SULFONATES-BINDING PROTEIN-RELATED"/>
    <property type="match status" value="1"/>
</dbReference>
<dbReference type="PANTHER" id="PTHR30024:SF7">
    <property type="entry name" value="NITRATE_NITRITE BINDING PROTEIN NRTA"/>
    <property type="match status" value="1"/>
</dbReference>
<dbReference type="Pfam" id="PF13379">
    <property type="entry name" value="NMT1_2"/>
    <property type="match status" value="1"/>
</dbReference>
<dbReference type="SUPFAM" id="SSF53850">
    <property type="entry name" value="Periplasmic binding protein-like II"/>
    <property type="match status" value="1"/>
</dbReference>
<dbReference type="PROSITE" id="PS51318">
    <property type="entry name" value="TAT"/>
    <property type="match status" value="1"/>
</dbReference>